<organism>
    <name type="scientific">Xanthomonas campestris pv. campestris (strain ATCC 33913 / DSM 3586 / NCPPB 528 / LMG 568 / P 25)</name>
    <dbReference type="NCBI Taxonomy" id="190485"/>
    <lineage>
        <taxon>Bacteria</taxon>
        <taxon>Pseudomonadati</taxon>
        <taxon>Pseudomonadota</taxon>
        <taxon>Gammaproteobacteria</taxon>
        <taxon>Lysobacterales</taxon>
        <taxon>Lysobacteraceae</taxon>
        <taxon>Xanthomonas</taxon>
    </lineage>
</organism>
<sequence length="57" mass="5882">MIKWAIIFAIIGLIAGALGFGGMAGAAMGIAKFLFWAGIIIAIVLFVLGMTIAKKVT</sequence>
<protein>
    <recommendedName>
        <fullName evidence="1">UPF0391 membrane protein XCC1302</fullName>
    </recommendedName>
</protein>
<keyword id="KW-1003">Cell membrane</keyword>
<keyword id="KW-0472">Membrane</keyword>
<keyword id="KW-1185">Reference proteome</keyword>
<keyword id="KW-0812">Transmembrane</keyword>
<keyword id="KW-1133">Transmembrane helix</keyword>
<dbReference type="EMBL" id="AE008922">
    <property type="protein sequence ID" value="AAM40600.1"/>
    <property type="status" value="ALT_INIT"/>
    <property type="molecule type" value="Genomic_DNA"/>
</dbReference>
<dbReference type="RefSeq" id="NP_636676.1">
    <property type="nucleotide sequence ID" value="NC_003902.1"/>
</dbReference>
<dbReference type="RefSeq" id="WP_003489471.1">
    <property type="nucleotide sequence ID" value="NC_003902.1"/>
</dbReference>
<dbReference type="STRING" id="190485.XCC1302"/>
<dbReference type="EnsemblBacteria" id="AAM40600">
    <property type="protein sequence ID" value="AAM40600"/>
    <property type="gene ID" value="XCC1302"/>
</dbReference>
<dbReference type="KEGG" id="xcc:XCC1302"/>
<dbReference type="PATRIC" id="fig|190485.4.peg.1394"/>
<dbReference type="eggNOG" id="COG5487">
    <property type="taxonomic scope" value="Bacteria"/>
</dbReference>
<dbReference type="HOGENOM" id="CLU_187346_1_1_6"/>
<dbReference type="Proteomes" id="UP000001010">
    <property type="component" value="Chromosome"/>
</dbReference>
<dbReference type="GO" id="GO:0005886">
    <property type="term" value="C:plasma membrane"/>
    <property type="evidence" value="ECO:0007669"/>
    <property type="project" value="UniProtKB-SubCell"/>
</dbReference>
<dbReference type="HAMAP" id="MF_01361">
    <property type="entry name" value="UPF0391"/>
    <property type="match status" value="1"/>
</dbReference>
<dbReference type="InterPro" id="IPR009760">
    <property type="entry name" value="DUF1328"/>
</dbReference>
<dbReference type="NCBIfam" id="NF010231">
    <property type="entry name" value="PRK13682.2-1"/>
    <property type="match status" value="1"/>
</dbReference>
<dbReference type="Pfam" id="PF07043">
    <property type="entry name" value="DUF1328"/>
    <property type="match status" value="1"/>
</dbReference>
<dbReference type="PIRSF" id="PIRSF036466">
    <property type="entry name" value="UCP036466"/>
    <property type="match status" value="1"/>
</dbReference>
<comment type="subcellular location">
    <subcellularLocation>
        <location evidence="1">Cell membrane</location>
        <topology evidence="1">Multi-pass membrane protein</topology>
    </subcellularLocation>
</comment>
<comment type="similarity">
    <text evidence="1">Belongs to the UPF0391 family.</text>
</comment>
<comment type="sequence caution" evidence="2">
    <conflict type="erroneous initiation">
        <sequence resource="EMBL-CDS" id="AAM40600"/>
    </conflict>
</comment>
<name>Y1302_XANCP</name>
<reference key="1">
    <citation type="journal article" date="2002" name="Nature">
        <title>Comparison of the genomes of two Xanthomonas pathogens with differing host specificities.</title>
        <authorList>
            <person name="da Silva A.C.R."/>
            <person name="Ferro J.A."/>
            <person name="Reinach F.C."/>
            <person name="Farah C.S."/>
            <person name="Furlan L.R."/>
            <person name="Quaggio R.B."/>
            <person name="Monteiro-Vitorello C.B."/>
            <person name="Van Sluys M.A."/>
            <person name="Almeida N.F. Jr."/>
            <person name="Alves L.M.C."/>
            <person name="do Amaral A.M."/>
            <person name="Bertolini M.C."/>
            <person name="Camargo L.E.A."/>
            <person name="Camarotte G."/>
            <person name="Cannavan F."/>
            <person name="Cardozo J."/>
            <person name="Chambergo F."/>
            <person name="Ciapina L.P."/>
            <person name="Cicarelli R.M.B."/>
            <person name="Coutinho L.L."/>
            <person name="Cursino-Santos J.R."/>
            <person name="El-Dorry H."/>
            <person name="Faria J.B."/>
            <person name="Ferreira A.J.S."/>
            <person name="Ferreira R.C.C."/>
            <person name="Ferro M.I.T."/>
            <person name="Formighieri E.F."/>
            <person name="Franco M.C."/>
            <person name="Greggio C.C."/>
            <person name="Gruber A."/>
            <person name="Katsuyama A.M."/>
            <person name="Kishi L.T."/>
            <person name="Leite R.P."/>
            <person name="Lemos E.G.M."/>
            <person name="Lemos M.V.F."/>
            <person name="Locali E.C."/>
            <person name="Machado M.A."/>
            <person name="Madeira A.M.B.N."/>
            <person name="Martinez-Rossi N.M."/>
            <person name="Martins E.C."/>
            <person name="Meidanis J."/>
            <person name="Menck C.F.M."/>
            <person name="Miyaki C.Y."/>
            <person name="Moon D.H."/>
            <person name="Moreira L.M."/>
            <person name="Novo M.T.M."/>
            <person name="Okura V.K."/>
            <person name="Oliveira M.C."/>
            <person name="Oliveira V.R."/>
            <person name="Pereira H.A."/>
            <person name="Rossi A."/>
            <person name="Sena J.A.D."/>
            <person name="Silva C."/>
            <person name="de Souza R.F."/>
            <person name="Spinola L.A.F."/>
            <person name="Takita M.A."/>
            <person name="Tamura R.E."/>
            <person name="Teixeira E.C."/>
            <person name="Tezza R.I.D."/>
            <person name="Trindade dos Santos M."/>
            <person name="Truffi D."/>
            <person name="Tsai S.M."/>
            <person name="White F.F."/>
            <person name="Setubal J.C."/>
            <person name="Kitajima J.P."/>
        </authorList>
    </citation>
    <scope>NUCLEOTIDE SEQUENCE [LARGE SCALE GENOMIC DNA]</scope>
    <source>
        <strain>ATCC 33913 / DSM 3586 / NCPPB 528 / LMG 568 / P 25</strain>
    </source>
</reference>
<evidence type="ECO:0000255" key="1">
    <source>
        <dbReference type="HAMAP-Rule" id="MF_01361"/>
    </source>
</evidence>
<evidence type="ECO:0000305" key="2"/>
<feature type="chain" id="PRO_0000256799" description="UPF0391 membrane protein XCC1302">
    <location>
        <begin position="1"/>
        <end position="57"/>
    </location>
</feature>
<feature type="transmembrane region" description="Helical" evidence="1">
    <location>
        <begin position="4"/>
        <end position="24"/>
    </location>
</feature>
<feature type="transmembrane region" description="Helical" evidence="1">
    <location>
        <begin position="33"/>
        <end position="53"/>
    </location>
</feature>
<accession>Q8PB24</accession>
<gene>
    <name type="ordered locus">XCC1302</name>
</gene>
<proteinExistence type="inferred from homology"/>